<gene>
    <name evidence="1" type="primary">nop10</name>
    <name type="ordered locus">TK1101</name>
</gene>
<proteinExistence type="inferred from homology"/>
<sequence>MHFRIRKCPNCGRYTLKEVCPVCGSETKVAHPPRFSPEDPYGEYRRRLKRELLGIGRRS</sequence>
<reference key="1">
    <citation type="journal article" date="2005" name="Genome Res.">
        <title>Complete genome sequence of the hyperthermophilic archaeon Thermococcus kodakaraensis KOD1 and comparison with Pyrococcus genomes.</title>
        <authorList>
            <person name="Fukui T."/>
            <person name="Atomi H."/>
            <person name="Kanai T."/>
            <person name="Matsumi R."/>
            <person name="Fujiwara S."/>
            <person name="Imanaka T."/>
        </authorList>
    </citation>
    <scope>NUCLEOTIDE SEQUENCE [LARGE SCALE GENOMIC DNA]</scope>
    <source>
        <strain>ATCC BAA-918 / JCM 12380 / KOD1</strain>
    </source>
</reference>
<protein>
    <recommendedName>
        <fullName evidence="1">Ribosome biogenesis protein Nop10</fullName>
    </recommendedName>
</protein>
<dbReference type="EMBL" id="AP006878">
    <property type="protein sequence ID" value="BAD85290.1"/>
    <property type="molecule type" value="Genomic_DNA"/>
</dbReference>
<dbReference type="RefSeq" id="WP_011250052.1">
    <property type="nucleotide sequence ID" value="NC_006624.1"/>
</dbReference>
<dbReference type="SMR" id="Q5JE48"/>
<dbReference type="FunCoup" id="Q5JE48">
    <property type="interactions" value="6"/>
</dbReference>
<dbReference type="STRING" id="69014.TK1101"/>
<dbReference type="EnsemblBacteria" id="BAD85290">
    <property type="protein sequence ID" value="BAD85290"/>
    <property type="gene ID" value="TK1101"/>
</dbReference>
<dbReference type="GeneID" id="78447614"/>
<dbReference type="KEGG" id="tko:TK1101"/>
<dbReference type="PATRIC" id="fig|69014.16.peg.1077"/>
<dbReference type="eggNOG" id="arCOG00906">
    <property type="taxonomic scope" value="Archaea"/>
</dbReference>
<dbReference type="HOGENOM" id="CLU_196480_1_0_2"/>
<dbReference type="InParanoid" id="Q5JE48"/>
<dbReference type="OrthoDB" id="7259at2157"/>
<dbReference type="PhylomeDB" id="Q5JE48"/>
<dbReference type="Proteomes" id="UP000000536">
    <property type="component" value="Chromosome"/>
</dbReference>
<dbReference type="GO" id="GO:1990904">
    <property type="term" value="C:ribonucleoprotein complex"/>
    <property type="evidence" value="ECO:0007669"/>
    <property type="project" value="UniProtKB-KW"/>
</dbReference>
<dbReference type="GO" id="GO:0030515">
    <property type="term" value="F:snoRNA binding"/>
    <property type="evidence" value="ECO:0007669"/>
    <property type="project" value="InterPro"/>
</dbReference>
<dbReference type="GO" id="GO:0001522">
    <property type="term" value="P:pseudouridine synthesis"/>
    <property type="evidence" value="ECO:0007669"/>
    <property type="project" value="InterPro"/>
</dbReference>
<dbReference type="GO" id="GO:0006364">
    <property type="term" value="P:rRNA processing"/>
    <property type="evidence" value="ECO:0007669"/>
    <property type="project" value="UniProtKB-UniRule"/>
</dbReference>
<dbReference type="Gene3D" id="2.20.28.40">
    <property type="entry name" value="H/ACA ribonucleoprotein complex, subunit Nop10"/>
    <property type="match status" value="1"/>
</dbReference>
<dbReference type="HAMAP" id="MF_00803">
    <property type="entry name" value="Nop10"/>
    <property type="match status" value="1"/>
</dbReference>
<dbReference type="InterPro" id="IPR007264">
    <property type="entry name" value="H/ACA_rnp_Nop10"/>
</dbReference>
<dbReference type="InterPro" id="IPR036756">
    <property type="entry name" value="H/ACA_rnp_Nop10_sf"/>
</dbReference>
<dbReference type="InterPro" id="IPR023532">
    <property type="entry name" value="Nop10_arc-typ"/>
</dbReference>
<dbReference type="NCBIfam" id="NF009623">
    <property type="entry name" value="PRK13130.1"/>
    <property type="match status" value="1"/>
</dbReference>
<dbReference type="PANTHER" id="PTHR13305:SF0">
    <property type="entry name" value="H_ACA RIBONUCLEOPROTEIN COMPLEX SUBUNIT 3"/>
    <property type="match status" value="1"/>
</dbReference>
<dbReference type="PANTHER" id="PTHR13305">
    <property type="entry name" value="RIBOSOME BIOGENESIS PROTEIN NOP10"/>
    <property type="match status" value="1"/>
</dbReference>
<dbReference type="Pfam" id="PF04135">
    <property type="entry name" value="Nop10p"/>
    <property type="match status" value="1"/>
</dbReference>
<dbReference type="SUPFAM" id="SSF144210">
    <property type="entry name" value="Nop10-like SnoRNP"/>
    <property type="match status" value="1"/>
</dbReference>
<comment type="function">
    <text evidence="1">Involved in ribosome biogenesis; more specifically in 18S rRNA pseudouridylation and in cleavage of pre-rRNA.</text>
</comment>
<comment type="similarity">
    <text evidence="1">Belongs to the NOP10 family.</text>
</comment>
<keyword id="KW-1185">Reference proteome</keyword>
<keyword id="KW-0687">Ribonucleoprotein</keyword>
<keyword id="KW-0690">Ribosome biogenesis</keyword>
<keyword id="KW-0698">rRNA processing</keyword>
<feature type="chain" id="PRO_0000149025" description="Ribosome biogenesis protein Nop10">
    <location>
        <begin position="1"/>
        <end position="59"/>
    </location>
</feature>
<accession>Q5JE48</accession>
<organism>
    <name type="scientific">Thermococcus kodakarensis (strain ATCC BAA-918 / JCM 12380 / KOD1)</name>
    <name type="common">Pyrococcus kodakaraensis (strain KOD1)</name>
    <dbReference type="NCBI Taxonomy" id="69014"/>
    <lineage>
        <taxon>Archaea</taxon>
        <taxon>Methanobacteriati</taxon>
        <taxon>Methanobacteriota</taxon>
        <taxon>Thermococci</taxon>
        <taxon>Thermococcales</taxon>
        <taxon>Thermococcaceae</taxon>
        <taxon>Thermococcus</taxon>
    </lineage>
</organism>
<name>NOP10_THEKO</name>
<evidence type="ECO:0000255" key="1">
    <source>
        <dbReference type="HAMAP-Rule" id="MF_00803"/>
    </source>
</evidence>